<name>RPOB_FERNB</name>
<evidence type="ECO:0000255" key="1">
    <source>
        <dbReference type="HAMAP-Rule" id="MF_01321"/>
    </source>
</evidence>
<accession>A7HNY2</accession>
<gene>
    <name evidence="1" type="primary">rpoB</name>
    <name type="ordered locus">Fnod_1782</name>
</gene>
<reference key="1">
    <citation type="submission" date="2007-07" db="EMBL/GenBank/DDBJ databases">
        <title>Complete sequence of Fervidobacterium nodosum Rt17-B1.</title>
        <authorList>
            <consortium name="US DOE Joint Genome Institute"/>
            <person name="Copeland A."/>
            <person name="Lucas S."/>
            <person name="Lapidus A."/>
            <person name="Barry K."/>
            <person name="Glavina del Rio T."/>
            <person name="Dalin E."/>
            <person name="Tice H."/>
            <person name="Pitluck S."/>
            <person name="Saunders E."/>
            <person name="Brettin T."/>
            <person name="Bruce D."/>
            <person name="Detter J.C."/>
            <person name="Han C."/>
            <person name="Schmutz J."/>
            <person name="Larimer F."/>
            <person name="Land M."/>
            <person name="Hauser L."/>
            <person name="Kyrpides N."/>
            <person name="Mikhailova N."/>
            <person name="Nelson K."/>
            <person name="Gogarten J.P."/>
            <person name="Noll K."/>
            <person name="Richardson P."/>
        </authorList>
    </citation>
    <scope>NUCLEOTIDE SEQUENCE [LARGE SCALE GENOMIC DNA]</scope>
    <source>
        <strain>ATCC 35602 / DSM 5306 / Rt17-B1</strain>
    </source>
</reference>
<dbReference type="EC" id="2.7.7.6" evidence="1"/>
<dbReference type="EMBL" id="CP000771">
    <property type="protein sequence ID" value="ABS61615.1"/>
    <property type="molecule type" value="Genomic_DNA"/>
</dbReference>
<dbReference type="RefSeq" id="WP_011994906.1">
    <property type="nucleotide sequence ID" value="NC_009718.1"/>
</dbReference>
<dbReference type="SMR" id="A7HNY2"/>
<dbReference type="STRING" id="381764.Fnod_1782"/>
<dbReference type="KEGG" id="fno:Fnod_1782"/>
<dbReference type="eggNOG" id="COG0085">
    <property type="taxonomic scope" value="Bacteria"/>
</dbReference>
<dbReference type="HOGENOM" id="CLU_000524_4_0_0"/>
<dbReference type="OrthoDB" id="9803954at2"/>
<dbReference type="Proteomes" id="UP000002415">
    <property type="component" value="Chromosome"/>
</dbReference>
<dbReference type="GO" id="GO:0000428">
    <property type="term" value="C:DNA-directed RNA polymerase complex"/>
    <property type="evidence" value="ECO:0007669"/>
    <property type="project" value="UniProtKB-KW"/>
</dbReference>
<dbReference type="GO" id="GO:0003677">
    <property type="term" value="F:DNA binding"/>
    <property type="evidence" value="ECO:0007669"/>
    <property type="project" value="UniProtKB-UniRule"/>
</dbReference>
<dbReference type="GO" id="GO:0003899">
    <property type="term" value="F:DNA-directed RNA polymerase activity"/>
    <property type="evidence" value="ECO:0007669"/>
    <property type="project" value="UniProtKB-UniRule"/>
</dbReference>
<dbReference type="GO" id="GO:0032549">
    <property type="term" value="F:ribonucleoside binding"/>
    <property type="evidence" value="ECO:0007669"/>
    <property type="project" value="InterPro"/>
</dbReference>
<dbReference type="GO" id="GO:0006351">
    <property type="term" value="P:DNA-templated transcription"/>
    <property type="evidence" value="ECO:0007669"/>
    <property type="project" value="UniProtKB-UniRule"/>
</dbReference>
<dbReference type="CDD" id="cd00653">
    <property type="entry name" value="RNA_pol_B_RPB2"/>
    <property type="match status" value="1"/>
</dbReference>
<dbReference type="FunFam" id="3.90.1800.10:FF:000001">
    <property type="entry name" value="DNA-directed RNA polymerase subunit beta"/>
    <property type="match status" value="1"/>
</dbReference>
<dbReference type="Gene3D" id="2.40.50.100">
    <property type="match status" value="1"/>
</dbReference>
<dbReference type="Gene3D" id="2.40.50.150">
    <property type="match status" value="1"/>
</dbReference>
<dbReference type="Gene3D" id="3.90.1100.10">
    <property type="match status" value="2"/>
</dbReference>
<dbReference type="Gene3D" id="2.30.150.10">
    <property type="entry name" value="DNA-directed RNA polymerase, beta subunit, external 1 domain"/>
    <property type="match status" value="1"/>
</dbReference>
<dbReference type="Gene3D" id="2.40.270.10">
    <property type="entry name" value="DNA-directed RNA polymerase, subunit 2, domain 6"/>
    <property type="match status" value="1"/>
</dbReference>
<dbReference type="Gene3D" id="3.90.1800.10">
    <property type="entry name" value="RNA polymerase alpha subunit dimerisation domain"/>
    <property type="match status" value="1"/>
</dbReference>
<dbReference type="Gene3D" id="3.90.1110.10">
    <property type="entry name" value="RNA polymerase Rpb2, domain 2"/>
    <property type="match status" value="1"/>
</dbReference>
<dbReference type="HAMAP" id="MF_01321">
    <property type="entry name" value="RNApol_bact_RpoB"/>
    <property type="match status" value="1"/>
</dbReference>
<dbReference type="InterPro" id="IPR042107">
    <property type="entry name" value="DNA-dir_RNA_pol_bsu_ext_1_sf"/>
</dbReference>
<dbReference type="InterPro" id="IPR019462">
    <property type="entry name" value="DNA-dir_RNA_pol_bsu_external_1"/>
</dbReference>
<dbReference type="InterPro" id="IPR015712">
    <property type="entry name" value="DNA-dir_RNA_pol_su2"/>
</dbReference>
<dbReference type="InterPro" id="IPR007120">
    <property type="entry name" value="DNA-dir_RNAP_su2_dom"/>
</dbReference>
<dbReference type="InterPro" id="IPR037033">
    <property type="entry name" value="DNA-dir_RNAP_su2_hyb_sf"/>
</dbReference>
<dbReference type="InterPro" id="IPR010243">
    <property type="entry name" value="RNA_pol_bsu_bac"/>
</dbReference>
<dbReference type="InterPro" id="IPR007121">
    <property type="entry name" value="RNA_pol_bsu_CS"/>
</dbReference>
<dbReference type="InterPro" id="IPR007644">
    <property type="entry name" value="RNA_pol_bsu_protrusion"/>
</dbReference>
<dbReference type="InterPro" id="IPR037034">
    <property type="entry name" value="RNA_pol_Rpb2_2_sf"/>
</dbReference>
<dbReference type="InterPro" id="IPR007645">
    <property type="entry name" value="RNA_pol_Rpb2_3"/>
</dbReference>
<dbReference type="InterPro" id="IPR007641">
    <property type="entry name" value="RNA_pol_Rpb2_7"/>
</dbReference>
<dbReference type="InterPro" id="IPR014724">
    <property type="entry name" value="RNA_pol_RPB2_OB-fold"/>
</dbReference>
<dbReference type="NCBIfam" id="NF001616">
    <property type="entry name" value="PRK00405.1"/>
    <property type="match status" value="1"/>
</dbReference>
<dbReference type="NCBIfam" id="TIGR02013">
    <property type="entry name" value="rpoB"/>
    <property type="match status" value="1"/>
</dbReference>
<dbReference type="PANTHER" id="PTHR20856">
    <property type="entry name" value="DNA-DIRECTED RNA POLYMERASE I SUBUNIT 2"/>
    <property type="match status" value="1"/>
</dbReference>
<dbReference type="Pfam" id="PF04563">
    <property type="entry name" value="RNA_pol_Rpb2_1"/>
    <property type="match status" value="1"/>
</dbReference>
<dbReference type="Pfam" id="PF04565">
    <property type="entry name" value="RNA_pol_Rpb2_3"/>
    <property type="match status" value="1"/>
</dbReference>
<dbReference type="Pfam" id="PF10385">
    <property type="entry name" value="RNA_pol_Rpb2_45"/>
    <property type="match status" value="1"/>
</dbReference>
<dbReference type="Pfam" id="PF00562">
    <property type="entry name" value="RNA_pol_Rpb2_6"/>
    <property type="match status" value="1"/>
</dbReference>
<dbReference type="Pfam" id="PF04560">
    <property type="entry name" value="RNA_pol_Rpb2_7"/>
    <property type="match status" value="1"/>
</dbReference>
<dbReference type="SUPFAM" id="SSF64484">
    <property type="entry name" value="beta and beta-prime subunits of DNA dependent RNA-polymerase"/>
    <property type="match status" value="1"/>
</dbReference>
<dbReference type="PROSITE" id="PS01166">
    <property type="entry name" value="RNA_POL_BETA"/>
    <property type="match status" value="1"/>
</dbReference>
<comment type="function">
    <text evidence="1">DNA-dependent RNA polymerase catalyzes the transcription of DNA into RNA using the four ribonucleoside triphosphates as substrates.</text>
</comment>
<comment type="catalytic activity">
    <reaction evidence="1">
        <text>RNA(n) + a ribonucleoside 5'-triphosphate = RNA(n+1) + diphosphate</text>
        <dbReference type="Rhea" id="RHEA:21248"/>
        <dbReference type="Rhea" id="RHEA-COMP:14527"/>
        <dbReference type="Rhea" id="RHEA-COMP:17342"/>
        <dbReference type="ChEBI" id="CHEBI:33019"/>
        <dbReference type="ChEBI" id="CHEBI:61557"/>
        <dbReference type="ChEBI" id="CHEBI:140395"/>
        <dbReference type="EC" id="2.7.7.6"/>
    </reaction>
</comment>
<comment type="subunit">
    <text evidence="1">The RNAP catalytic core consists of 2 alpha, 1 beta, 1 beta' and 1 omega subunit. When a sigma factor is associated with the core the holoenzyme is formed, which can initiate transcription.</text>
</comment>
<comment type="similarity">
    <text evidence="1">Belongs to the RNA polymerase beta chain family.</text>
</comment>
<keyword id="KW-0240">DNA-directed RNA polymerase</keyword>
<keyword id="KW-0548">Nucleotidyltransferase</keyword>
<keyword id="KW-1185">Reference proteome</keyword>
<keyword id="KW-0804">Transcription</keyword>
<keyword id="KW-0808">Transferase</keyword>
<sequence>MKTYQIGKRTRYSFGKVDEIIQVPDLVEIQRKSFEELLNHGILRILKKFSPITSAKVEGRREKGFNLEFVNFRVGAPLHSVEECKQRLLTYVAPFYATVRVTDVSTGEMREEEVSLGNYPIMTENQTFVINGVERVVVSQLVRSPGVYFVEEPTKNIGAKPIYLAHFLPVRGVWLEIMLNLNDETLYARIDRRKRLNLFLVLKTLGFQNDIDILSLFPAYLDVEDDYSLKQSEGIIILEKIVSKSGEVIAEKGSVLTSTLVEILREHGIEKIKVVNNYMFKTYMKLKEKLKMPLEENISELRAFMEIYKELRPGEVFRYNAAKSYWNNLYFNEERFELSEVGRYKMNKKLTNAYRKYLIEIEGRNPKSVERIEYEEKSNALTPIDIILVIRMLLETEKHPETLDTKDHLSNKRVKTVGELIGSEFERAFSKSIHQIQEKLATYTSLDKISIPSLINLRNVIASLNSFFATNPLSQFMDQVNPIAELTHKRRLTAVGPGGLKRERARFEVRDVHHSHYGRMCPIETPEGGNIGLITSLSVYATIDEYGFLVTPYRRITNGKLANEVVYLAADEEENYKIASVTIAFDKEGNIIQERVPVRYLEKIVYVHKNEVDLVDISPKQIVSVTTSLIPFLEHDDANRALMGSNMQRQAVPVIKPEAPFVGTGMEYAAAIYSGHVVLAKNDGVVKKVDGRKIIIHRIDENGQLMYDKKGNPIIDEYTLLKYVRSNQDTSITQKPIVNVGDFVKKGSPIADGPATDNGELALGKNVLVAFLPWEGYNFEDAILVSEELLEEDTFTSVHIEVYETTARETRVGPEEITSEIPNVSKENIRNLDENGIIRIGAYVGKQKYFTSQDILVGKVTPKGESDASPEEKIMRSVFGEKGKDVKDSSLRVPHGVEGRVIGVHVFHKEEVGDLGPGVNTLVRVYLATRKPLEVGDKLAGRHGNKGVVSMILPKEDMPFLPDGTPVQVVLSPLGVPSRMNIGQVLETSLGWLAKLTNRYFATPVFDGAKEDDILPELYKVRETLNLHHGDDPNNPSGKVTLRDGRTGKEFDFPVLVGYMYIMKLIHIARDKIHARATGPYSLIHQQPLGGKAQFGGQRFGEMEVWALEAYGASYTLNEMLTVKSDDIKGRTEVYKAIMKSKNLPEPGLPESFKVLVRELKGLALDVRVYDEHGNEIDIEKL</sequence>
<organism>
    <name type="scientific">Fervidobacterium nodosum (strain ATCC 35602 / DSM 5306 / Rt17-B1)</name>
    <dbReference type="NCBI Taxonomy" id="381764"/>
    <lineage>
        <taxon>Bacteria</taxon>
        <taxon>Thermotogati</taxon>
        <taxon>Thermotogota</taxon>
        <taxon>Thermotogae</taxon>
        <taxon>Thermotogales</taxon>
        <taxon>Fervidobacteriaceae</taxon>
        <taxon>Fervidobacterium</taxon>
    </lineage>
</organism>
<feature type="chain" id="PRO_0000329176" description="DNA-directed RNA polymerase subunit beta">
    <location>
        <begin position="1"/>
        <end position="1182"/>
    </location>
</feature>
<proteinExistence type="inferred from homology"/>
<protein>
    <recommendedName>
        <fullName evidence="1">DNA-directed RNA polymerase subunit beta</fullName>
        <shortName evidence="1">RNAP subunit beta</shortName>
        <ecNumber evidence="1">2.7.7.6</ecNumber>
    </recommendedName>
    <alternativeName>
        <fullName evidence="1">RNA polymerase subunit beta</fullName>
    </alternativeName>
    <alternativeName>
        <fullName evidence="1">Transcriptase subunit beta</fullName>
    </alternativeName>
</protein>